<keyword id="KW-0025">Alternative splicing</keyword>
<keyword id="KW-1015">Disulfide bond</keyword>
<keyword id="KW-0325">Glycoprotein</keyword>
<keyword id="KW-0326">Glycosidase</keyword>
<keyword id="KW-0378">Hydrolase</keyword>
<keyword id="KW-1185">Reference proteome</keyword>
<keyword id="KW-0732">Signal</keyword>
<gene>
    <name evidence="8" type="primary">BGLU29</name>
    <name evidence="10" type="ordered locus">At2g44470</name>
    <name evidence="11" type="ORF">F4I1.28</name>
</gene>
<proteinExistence type="evidence at transcript level"/>
<evidence type="ECO:0000250" key="1">
    <source>
        <dbReference type="UniProtKB" id="O64879"/>
    </source>
</evidence>
<evidence type="ECO:0000250" key="2">
    <source>
        <dbReference type="UniProtKB" id="Q1XH05"/>
    </source>
</evidence>
<evidence type="ECO:0000250" key="3">
    <source>
        <dbReference type="UniProtKB" id="Q7XSK0"/>
    </source>
</evidence>
<evidence type="ECO:0000250" key="4">
    <source>
        <dbReference type="UniProtKB" id="Q9SPP9"/>
    </source>
</evidence>
<evidence type="ECO:0000255" key="5"/>
<evidence type="ECO:0000255" key="6">
    <source>
        <dbReference type="PROSITE-ProRule" id="PRU00498"/>
    </source>
</evidence>
<evidence type="ECO:0000303" key="7">
    <source>
    </source>
</evidence>
<evidence type="ECO:0000303" key="8">
    <source>
    </source>
</evidence>
<evidence type="ECO:0000305" key="9"/>
<evidence type="ECO:0000312" key="10">
    <source>
        <dbReference type="Araport" id="AT2G44470"/>
    </source>
</evidence>
<evidence type="ECO:0000312" key="11">
    <source>
        <dbReference type="EMBL" id="AAC16093.1"/>
    </source>
</evidence>
<reference key="1">
    <citation type="journal article" date="1999" name="Nature">
        <title>Sequence and analysis of chromosome 2 of the plant Arabidopsis thaliana.</title>
        <authorList>
            <person name="Lin X."/>
            <person name="Kaul S."/>
            <person name="Rounsley S.D."/>
            <person name="Shea T.P."/>
            <person name="Benito M.-I."/>
            <person name="Town C.D."/>
            <person name="Fujii C.Y."/>
            <person name="Mason T.M."/>
            <person name="Bowman C.L."/>
            <person name="Barnstead M.E."/>
            <person name="Feldblyum T.V."/>
            <person name="Buell C.R."/>
            <person name="Ketchum K.A."/>
            <person name="Lee J.J."/>
            <person name="Ronning C.M."/>
            <person name="Koo H.L."/>
            <person name="Moffat K.S."/>
            <person name="Cronin L.A."/>
            <person name="Shen M."/>
            <person name="Pai G."/>
            <person name="Van Aken S."/>
            <person name="Umayam L."/>
            <person name="Tallon L.J."/>
            <person name="Gill J.E."/>
            <person name="Adams M.D."/>
            <person name="Carrera A.J."/>
            <person name="Creasy T.H."/>
            <person name="Goodman H.M."/>
            <person name="Somerville C.R."/>
            <person name="Copenhaver G.P."/>
            <person name="Preuss D."/>
            <person name="Nierman W.C."/>
            <person name="White O."/>
            <person name="Eisen J.A."/>
            <person name="Salzberg S.L."/>
            <person name="Fraser C.M."/>
            <person name="Venter J.C."/>
        </authorList>
    </citation>
    <scope>NUCLEOTIDE SEQUENCE [LARGE SCALE GENOMIC DNA]</scope>
    <source>
        <strain>cv. Columbia</strain>
    </source>
</reference>
<reference key="2">
    <citation type="journal article" date="2017" name="Plant J.">
        <title>Araport11: a complete reannotation of the Arabidopsis thaliana reference genome.</title>
        <authorList>
            <person name="Cheng C.Y."/>
            <person name="Krishnakumar V."/>
            <person name="Chan A.P."/>
            <person name="Thibaud-Nissen F."/>
            <person name="Schobel S."/>
            <person name="Town C.D."/>
        </authorList>
    </citation>
    <scope>GENOME REANNOTATION</scope>
    <source>
        <strain>cv. Columbia</strain>
    </source>
</reference>
<reference key="3">
    <citation type="journal article" date="2002" name="Science">
        <title>Functional annotation of a full-length Arabidopsis cDNA collection.</title>
        <authorList>
            <person name="Seki M."/>
            <person name="Narusaka M."/>
            <person name="Kamiya A."/>
            <person name="Ishida J."/>
            <person name="Satou M."/>
            <person name="Sakurai T."/>
            <person name="Nakajima M."/>
            <person name="Enju A."/>
            <person name="Akiyama K."/>
            <person name="Oono Y."/>
            <person name="Muramatsu M."/>
            <person name="Hayashizaki Y."/>
            <person name="Kawai J."/>
            <person name="Carninci P."/>
            <person name="Itoh M."/>
            <person name="Ishii Y."/>
            <person name="Arakawa T."/>
            <person name="Shibata K."/>
            <person name="Shinagawa A."/>
            <person name="Shinozaki K."/>
        </authorList>
    </citation>
    <scope>NUCLEOTIDE SEQUENCE [LARGE SCALE MRNA] (ISOFORM 2)</scope>
    <source>
        <strain>cv. Columbia</strain>
    </source>
</reference>
<reference key="4">
    <citation type="journal article" date="2004" name="Plant Mol. Biol.">
        <title>Functional genomic analysis of Arabidopsis thaliana glycoside hydrolase family 1.</title>
        <authorList>
            <person name="Xu Z."/>
            <person name="Escamilla-Trevino L.L."/>
            <person name="Zeng L."/>
            <person name="Lalgondar M."/>
            <person name="Bevan D.R."/>
            <person name="Winkel B.S.J."/>
            <person name="Mohamed A."/>
            <person name="Cheng C.-L."/>
            <person name="Shih M.-C."/>
            <person name="Poulton J.E."/>
            <person name="Esen A."/>
        </authorList>
    </citation>
    <scope>GENE FAMILY</scope>
    <scope>NOMENCLATURE</scope>
</reference>
<organism>
    <name type="scientific">Arabidopsis thaliana</name>
    <name type="common">Mouse-ear cress</name>
    <dbReference type="NCBI Taxonomy" id="3702"/>
    <lineage>
        <taxon>Eukaryota</taxon>
        <taxon>Viridiplantae</taxon>
        <taxon>Streptophyta</taxon>
        <taxon>Embryophyta</taxon>
        <taxon>Tracheophyta</taxon>
        <taxon>Spermatophyta</taxon>
        <taxon>Magnoliopsida</taxon>
        <taxon>eudicotyledons</taxon>
        <taxon>Gunneridae</taxon>
        <taxon>Pentapetalae</taxon>
        <taxon>rosids</taxon>
        <taxon>malvids</taxon>
        <taxon>Brassicales</taxon>
        <taxon>Brassicaceae</taxon>
        <taxon>Camelineae</taxon>
        <taxon>Arabidopsis</taxon>
    </lineage>
</organism>
<sequence>MNVQIFILLLIISWLTPKITSLPPESQVLDRSSFPDDFVFGTAISAFQSEGATSEGGKSPTIWDYFSHTFPERTNMQNADVAVDFYHRYKDDIKLIEELNVDAFRFSISWARLIPSGKVKDGVNKEGVQFYKALIDELIANGIQPSVTLYHWDHPQALEDEYGGFLNPQIIEDFRNFARVCFENFGDKVKMWTTINEPYVISVAGYDTGIKAVGRCSKWVNSRCQAGDSAIEPYIVSHHLLLSHAAAVQEFRNCNKTLQDGKIGIVISPWWLEPYDSTSSADKEAVERGLPLELEWHLNPVIYGDYPETMKKHVGNRLPAFTPEQSKMLINSSDFIGVNYYSIHFTAHLPHIDHTRPRFRTDHHFEKKLINRSNHETGPGDDRGKIHSHPEGLRRVLNYIKDKYNNPIVYVKENGIDHYDDGTKSRETILKDTFRISYHQDHLKQVHKAIIEDGCDVRGYYVWSLFDNFEWEHGYNSRFGMYYVDFKNNLQRYPKDSVNWFKKFLSRPVVRSEETEDEKVCNVSRKEEKINKALDVSEGFKTSVDSIVNLIKNGSRIEEEDDEEERDFCAFKNHNDQLGFFLKLQNSLGF</sequence>
<dbReference type="EC" id="3.2.1.21" evidence="1"/>
<dbReference type="EMBL" id="AC004521">
    <property type="protein sequence ID" value="AAC16093.1"/>
    <property type="status" value="ALT_SEQ"/>
    <property type="molecule type" value="Genomic_DNA"/>
</dbReference>
<dbReference type="EMBL" id="CP002685">
    <property type="protein sequence ID" value="AEC10423.1"/>
    <property type="molecule type" value="Genomic_DNA"/>
</dbReference>
<dbReference type="EMBL" id="CP002685">
    <property type="protein sequence ID" value="AEC10424.1"/>
    <property type="molecule type" value="Genomic_DNA"/>
</dbReference>
<dbReference type="EMBL" id="CP002685">
    <property type="protein sequence ID" value="AEC10425.1"/>
    <property type="molecule type" value="Genomic_DNA"/>
</dbReference>
<dbReference type="EMBL" id="AK118055">
    <property type="protein sequence ID" value="BAC42686.1"/>
    <property type="molecule type" value="mRNA"/>
</dbReference>
<dbReference type="PIR" id="T02402">
    <property type="entry name" value="T02402"/>
</dbReference>
<dbReference type="RefSeq" id="NP_001078056.1">
    <molecule id="Q8GXT2-3"/>
    <property type="nucleotide sequence ID" value="NM_001084587.1"/>
</dbReference>
<dbReference type="RefSeq" id="NP_001118524.1">
    <molecule id="Q8GXT2-1"/>
    <property type="nucleotide sequence ID" value="NM_001125052.1"/>
</dbReference>
<dbReference type="RefSeq" id="NP_850417.1">
    <molecule id="Q8GXT2-2"/>
    <property type="nucleotide sequence ID" value="NM_180086.1"/>
</dbReference>
<dbReference type="SMR" id="Q8GXT2"/>
<dbReference type="FunCoup" id="Q8GXT2">
    <property type="interactions" value="283"/>
</dbReference>
<dbReference type="STRING" id="3702.Q8GXT2"/>
<dbReference type="CAZy" id="GH1">
    <property type="family name" value="Glycoside Hydrolase Family 1"/>
</dbReference>
<dbReference type="GlyCosmos" id="Q8GXT2">
    <property type="glycosylation" value="5 sites, No reported glycans"/>
</dbReference>
<dbReference type="GlyGen" id="Q8GXT2">
    <property type="glycosylation" value="5 sites"/>
</dbReference>
<dbReference type="PaxDb" id="3702-AT2G44470.3"/>
<dbReference type="ProteomicsDB" id="240420">
    <molecule id="Q8GXT2-1"/>
</dbReference>
<dbReference type="EnsemblPlants" id="AT2G44470.1">
    <molecule id="Q8GXT2-2"/>
    <property type="protein sequence ID" value="AT2G44470.1"/>
    <property type="gene ID" value="AT2G44470"/>
</dbReference>
<dbReference type="EnsemblPlants" id="AT2G44470.2">
    <molecule id="Q8GXT2-3"/>
    <property type="protein sequence ID" value="AT2G44470.2"/>
    <property type="gene ID" value="AT2G44470"/>
</dbReference>
<dbReference type="EnsemblPlants" id="AT2G44470.3">
    <molecule id="Q8GXT2-1"/>
    <property type="protein sequence ID" value="AT2G44470.3"/>
    <property type="gene ID" value="AT2G44470"/>
</dbReference>
<dbReference type="GeneID" id="819054"/>
<dbReference type="Gramene" id="AT2G44470.1">
    <molecule id="Q8GXT2-2"/>
    <property type="protein sequence ID" value="AT2G44470.1"/>
    <property type="gene ID" value="AT2G44470"/>
</dbReference>
<dbReference type="Gramene" id="AT2G44470.2">
    <molecule id="Q8GXT2-3"/>
    <property type="protein sequence ID" value="AT2G44470.2"/>
    <property type="gene ID" value="AT2G44470"/>
</dbReference>
<dbReference type="Gramene" id="AT2G44470.3">
    <molecule id="Q8GXT2-1"/>
    <property type="protein sequence ID" value="AT2G44470.3"/>
    <property type="gene ID" value="AT2G44470"/>
</dbReference>
<dbReference type="KEGG" id="ath:AT2G44470"/>
<dbReference type="Araport" id="AT2G44470"/>
<dbReference type="TAIR" id="AT2G44470">
    <property type="gene designation" value="BGLU29"/>
</dbReference>
<dbReference type="eggNOG" id="KOG0626">
    <property type="taxonomic scope" value="Eukaryota"/>
</dbReference>
<dbReference type="HOGENOM" id="CLU_001859_1_0_1"/>
<dbReference type="InParanoid" id="Q8GXT2"/>
<dbReference type="OMA" id="AITCEAM"/>
<dbReference type="PhylomeDB" id="Q8GXT2"/>
<dbReference type="BioCyc" id="ARA:AT2G44470-MONOMER"/>
<dbReference type="PRO" id="PR:Q8GXT2"/>
<dbReference type="Proteomes" id="UP000006548">
    <property type="component" value="Chromosome 2"/>
</dbReference>
<dbReference type="ExpressionAtlas" id="Q8GXT2">
    <property type="expression patterns" value="baseline and differential"/>
</dbReference>
<dbReference type="GO" id="GO:0008422">
    <property type="term" value="F:beta-glucosidase activity"/>
    <property type="evidence" value="ECO:0007669"/>
    <property type="project" value="UniProtKB-EC"/>
</dbReference>
<dbReference type="GO" id="GO:0005975">
    <property type="term" value="P:carbohydrate metabolic process"/>
    <property type="evidence" value="ECO:0007669"/>
    <property type="project" value="InterPro"/>
</dbReference>
<dbReference type="FunFam" id="3.20.20.80:FF:000022">
    <property type="entry name" value="Beta-glucosidase 11"/>
    <property type="match status" value="1"/>
</dbReference>
<dbReference type="Gene3D" id="3.20.20.80">
    <property type="entry name" value="Glycosidases"/>
    <property type="match status" value="1"/>
</dbReference>
<dbReference type="InterPro" id="IPR001360">
    <property type="entry name" value="Glyco_hydro_1"/>
</dbReference>
<dbReference type="InterPro" id="IPR033132">
    <property type="entry name" value="Glyco_hydro_1_N_CS"/>
</dbReference>
<dbReference type="InterPro" id="IPR017853">
    <property type="entry name" value="Glycoside_hydrolase_SF"/>
</dbReference>
<dbReference type="PANTHER" id="PTHR10353:SF176">
    <property type="entry name" value="BETA-GLUCOSIDASE 29"/>
    <property type="match status" value="1"/>
</dbReference>
<dbReference type="PANTHER" id="PTHR10353">
    <property type="entry name" value="GLYCOSYL HYDROLASE"/>
    <property type="match status" value="1"/>
</dbReference>
<dbReference type="Pfam" id="PF00232">
    <property type="entry name" value="Glyco_hydro_1"/>
    <property type="match status" value="1"/>
</dbReference>
<dbReference type="PRINTS" id="PR00131">
    <property type="entry name" value="GLHYDRLASE1"/>
</dbReference>
<dbReference type="SUPFAM" id="SSF51445">
    <property type="entry name" value="(Trans)glycosidases"/>
    <property type="match status" value="1"/>
</dbReference>
<dbReference type="PROSITE" id="PS00653">
    <property type="entry name" value="GLYCOSYL_HYDROL_F1_2"/>
    <property type="match status" value="1"/>
</dbReference>
<protein>
    <recommendedName>
        <fullName evidence="8">Beta-glucosidase 29</fullName>
        <shortName evidence="8">AtBGLU29</shortName>
        <ecNumber evidence="1">3.2.1.21</ecNumber>
    </recommendedName>
</protein>
<comment type="catalytic activity">
    <reaction evidence="1">
        <text>Hydrolysis of terminal, non-reducing beta-D-glucosyl residues with release of beta-D-glucose.</text>
        <dbReference type="EC" id="3.2.1.21"/>
    </reaction>
</comment>
<comment type="alternative products">
    <event type="alternative splicing"/>
    <isoform>
        <id>Q8GXT2-1</id>
        <name>1</name>
        <sequence type="displayed"/>
    </isoform>
    <isoform>
        <id>Q8GXT2-2</id>
        <name>2</name>
        <sequence type="described" ref="VSP_038462 VSP_038463"/>
    </isoform>
    <isoform>
        <id>Q8GXT2-3</id>
        <name>3</name>
        <sequence type="described" ref="VSP_038460 VSP_038461"/>
    </isoform>
</comment>
<comment type="similarity">
    <text evidence="9">Belongs to the glycosyl hydrolase 1 family.</text>
</comment>
<comment type="sequence caution" evidence="9">
    <conflict type="erroneous gene model prediction">
        <sequence resource="EMBL-CDS" id="AAC16093"/>
    </conflict>
</comment>
<accession>Q8GXT2</accession>
<accession>A8MQN1</accession>
<accession>O64881</accession>
<feature type="signal peptide" evidence="5">
    <location>
        <begin position="1"/>
        <end position="21"/>
    </location>
</feature>
<feature type="chain" id="PRO_0000389591" description="Beta-glucosidase 29">
    <location>
        <begin position="22"/>
        <end position="590"/>
    </location>
</feature>
<feature type="active site" description="Proton donor" evidence="3">
    <location>
        <position position="197"/>
    </location>
</feature>
<feature type="active site" description="Nucleophile" evidence="3">
    <location>
        <position position="413"/>
    </location>
</feature>
<feature type="binding site" evidence="3">
    <location>
        <position position="48"/>
    </location>
    <ligand>
        <name>a beta-D-glucoside</name>
        <dbReference type="ChEBI" id="CHEBI:22798"/>
    </ligand>
</feature>
<feature type="binding site" evidence="3">
    <location>
        <position position="151"/>
    </location>
    <ligand>
        <name>a beta-D-glucoside</name>
        <dbReference type="ChEBI" id="CHEBI:22798"/>
    </ligand>
</feature>
<feature type="binding site" evidence="3">
    <location>
        <begin position="196"/>
        <end position="197"/>
    </location>
    <ligand>
        <name>a beta-D-glucoside</name>
        <dbReference type="ChEBI" id="CHEBI:22798"/>
    </ligand>
</feature>
<feature type="binding site" evidence="3">
    <location>
        <position position="341"/>
    </location>
    <ligand>
        <name>a beta-D-glucoside</name>
        <dbReference type="ChEBI" id="CHEBI:22798"/>
    </ligand>
</feature>
<feature type="binding site" evidence="4">
    <location>
        <position position="413"/>
    </location>
    <ligand>
        <name>a beta-D-glucoside</name>
        <dbReference type="ChEBI" id="CHEBI:22798"/>
    </ligand>
</feature>
<feature type="binding site" evidence="3">
    <location>
        <position position="463"/>
    </location>
    <ligand>
        <name>a beta-D-glucoside</name>
        <dbReference type="ChEBI" id="CHEBI:22798"/>
    </ligand>
</feature>
<feature type="binding site" evidence="3">
    <location>
        <begin position="470"/>
        <end position="471"/>
    </location>
    <ligand>
        <name>a beta-D-glucoside</name>
        <dbReference type="ChEBI" id="CHEBI:22798"/>
    </ligand>
</feature>
<feature type="binding site" evidence="2">
    <location>
        <position position="479"/>
    </location>
    <ligand>
        <name>a beta-D-glucoside</name>
        <dbReference type="ChEBI" id="CHEBI:22798"/>
    </ligand>
</feature>
<feature type="glycosylation site" description="N-linked (GlcNAc...) asparagine" evidence="6">
    <location>
        <position position="255"/>
    </location>
</feature>
<feature type="glycosylation site" description="N-linked (GlcNAc...) asparagine" evidence="6">
    <location>
        <position position="331"/>
    </location>
</feature>
<feature type="glycosylation site" description="N-linked (GlcNAc...) asparagine" evidence="6">
    <location>
        <position position="371"/>
    </location>
</feature>
<feature type="glycosylation site" description="N-linked (GlcNAc...) asparagine" evidence="6">
    <location>
        <position position="522"/>
    </location>
</feature>
<feature type="glycosylation site" description="N-linked (GlcNAc...) asparagine" evidence="6">
    <location>
        <position position="553"/>
    </location>
</feature>
<feature type="disulfide bond" evidence="3">
    <location>
        <begin position="216"/>
        <end position="224"/>
    </location>
</feature>
<feature type="splice variant" id="VSP_038460" description="In isoform 3." evidence="9">
    <original>DDRGKIHSHPEGLRRVL</original>
    <variation>VCNILIIFIPKILKCFD</variation>
    <location>
        <begin position="381"/>
        <end position="397"/>
    </location>
</feature>
<feature type="splice variant" id="VSP_038461" description="In isoform 3." evidence="9">
    <location>
        <begin position="398"/>
        <end position="590"/>
    </location>
</feature>
<feature type="splice variant" id="VSP_038462" description="In isoform 2." evidence="7">
    <original>I</original>
    <variation>M</variation>
    <location>
        <position position="451"/>
    </location>
</feature>
<feature type="splice variant" id="VSP_038463" description="In isoform 2." evidence="7">
    <location>
        <begin position="452"/>
        <end position="590"/>
    </location>
</feature>
<name>BGL29_ARATH</name>